<feature type="chain" id="PRO_0000334518" description="KIF-binding protein">
    <location>
        <begin position="1"/>
        <end position="631"/>
    </location>
</feature>
<feature type="region of interest" description="Disordered" evidence="2">
    <location>
        <begin position="60"/>
        <end position="88"/>
    </location>
</feature>
<feature type="compositionally biased region" description="Acidic residues" evidence="2">
    <location>
        <begin position="60"/>
        <end position="70"/>
    </location>
</feature>
<accession>A8WE67</accession>
<name>KBP_DANRE</name>
<comment type="function">
    <text evidence="1 3">Activator of KIF1B plus-end-directed microtubule motor activity (By similarity). Required for organization of axonal microtubules, and axonal outgrowth and maintenance during peripheral and central nervous system development (PubMed:18192286).</text>
</comment>
<comment type="subcellular location">
    <subcellularLocation>
        <location evidence="1">Cytoplasm</location>
        <location evidence="1">Cytoskeleton</location>
    </subcellularLocation>
</comment>
<comment type="tissue specificity">
    <text evidence="3">At 30 hpf, primarily expressed in central and peripheral neurons.</text>
</comment>
<comment type="similarity">
    <text evidence="4">Belongs to the KIF-binding protein family.</text>
</comment>
<sequence>MAANNSIEWRAVCEKFRLAQELSEIESKKDPENNPFRSKYKARDLLKEIHCSLKKIEIEEQGEAGDEADCESSQTADGEPEDGFEKTFTGDSAAGLRAARLAVLQYHLGVNHIETEELSAGELHLMVCMKLIDKCTTTRENVSLFIHVRNQLGILWAGRDEIEKAQGFLEIAETMYLVYMKEDGQPPLDLQDFFVPEGEELSQQEKIRRFEMAYTHTLYYLAQVYKNLQQYERAAQYCHSTLQRQLEYKQFAPLEWAINAATLSQYYITKTRYMEARHCLAAASVIANLAGEIPSEAAAKESEAESEKREELLQKRAEIARCWIKYCLNLLQDAKKLLEDNIGELDLDRQDELKRARRNEEEEKEKGRKSAILFGSSDTFDSICSLEEKVSSMLPLEFEEARSIFLVGQSYVTQAKEYFAMDGHVTDHIEILQDHSALFKVLAFFEEDLERRCKMHKRRVDMLEPICKDLNAQYYLLICRQLQFELAETYYEMMDLKLAVADKLDQPDVHTIKKFNHLCSSSMKYYQMFLDSTRSPEGKFPEKLEDDLLRPALVAKFRVARLHSKLISSNLATQMENLSLSLESYNFVVQYCEENPEAKNAVETELELSMEMVSLLPLKINRIRSTLASSK</sequence>
<reference key="1">
    <citation type="journal article" date="2008" name="Development">
        <title>KBP is essential for axonal structure, outgrowth and maintenance in zebrafish, providing insight into the cellular basis of Goldberg-Shprintzen syndrome.</title>
        <authorList>
            <person name="Lyons D.A."/>
            <person name="Naylor S.G."/>
            <person name="Mercurio S."/>
            <person name="Dominguez C."/>
            <person name="Talbot W.S."/>
        </authorList>
    </citation>
    <scope>NUCLEOTIDE SEQUENCE [MRNA]</scope>
    <scope>FUNCTION</scope>
    <scope>TISSUE SPECIFICITY</scope>
</reference>
<proteinExistence type="evidence at transcript level"/>
<dbReference type="EMBL" id="EU234534">
    <property type="protein sequence ID" value="ABW89743.1"/>
    <property type="molecule type" value="mRNA"/>
</dbReference>
<dbReference type="SMR" id="A8WE67"/>
<dbReference type="FunCoup" id="A8WE67">
    <property type="interactions" value="1490"/>
</dbReference>
<dbReference type="STRING" id="7955.ENSDARP00000083675"/>
<dbReference type="PaxDb" id="7955-ENSDARP00000083675"/>
<dbReference type="PeptideAtlas" id="A8WE67"/>
<dbReference type="AGR" id="ZFIN:ZDB-GENE-070117-1989"/>
<dbReference type="ZFIN" id="ZDB-GENE-070117-1989">
    <property type="gene designation" value="kifbp"/>
</dbReference>
<dbReference type="eggNOG" id="ENOG502QPZT">
    <property type="taxonomic scope" value="Eukaryota"/>
</dbReference>
<dbReference type="InParanoid" id="A8WE67"/>
<dbReference type="PRO" id="PR:A8WE67"/>
<dbReference type="Proteomes" id="UP000000437">
    <property type="component" value="Unplaced"/>
</dbReference>
<dbReference type="GO" id="GO:0005856">
    <property type="term" value="C:cytoskeleton"/>
    <property type="evidence" value="ECO:0007669"/>
    <property type="project" value="UniProtKB-SubCell"/>
</dbReference>
<dbReference type="GO" id="GO:0005739">
    <property type="term" value="C:mitochondrion"/>
    <property type="evidence" value="ECO:0000250"/>
    <property type="project" value="UniProtKB"/>
</dbReference>
<dbReference type="GO" id="GO:0021952">
    <property type="term" value="P:central nervous system projection neuron axonogenesis"/>
    <property type="evidence" value="ECO:0000315"/>
    <property type="project" value="ZFIN"/>
</dbReference>
<dbReference type="GO" id="GO:0048929">
    <property type="term" value="P:efferent axon development in posterior lateral line nerve"/>
    <property type="evidence" value="ECO:0000315"/>
    <property type="project" value="ZFIN"/>
</dbReference>
<dbReference type="GO" id="GO:0048484">
    <property type="term" value="P:enteric nervous system development"/>
    <property type="evidence" value="ECO:0000315"/>
    <property type="project" value="ZFIN"/>
</dbReference>
<dbReference type="GO" id="GO:0000226">
    <property type="term" value="P:microtubule cytoskeleton organization"/>
    <property type="evidence" value="ECO:0000315"/>
    <property type="project" value="ZFIN"/>
</dbReference>
<dbReference type="GO" id="GO:0047497">
    <property type="term" value="P:mitochondrion transport along microtubule"/>
    <property type="evidence" value="ECO:0000250"/>
    <property type="project" value="UniProtKB"/>
</dbReference>
<dbReference type="GO" id="GO:0007399">
    <property type="term" value="P:nervous system development"/>
    <property type="evidence" value="ECO:0000316"/>
    <property type="project" value="ZFIN"/>
</dbReference>
<dbReference type="GO" id="GO:1990535">
    <property type="term" value="P:neuron projection maintenance"/>
    <property type="evidence" value="ECO:0000315"/>
    <property type="project" value="ZFIN"/>
</dbReference>
<dbReference type="InterPro" id="IPR022083">
    <property type="entry name" value="KBP"/>
</dbReference>
<dbReference type="InterPro" id="IPR011990">
    <property type="entry name" value="TPR-like_helical_dom_sf"/>
</dbReference>
<dbReference type="PANTHER" id="PTHR46321:SF1">
    <property type="entry name" value="KIF-BINDING PROTEIN"/>
    <property type="match status" value="1"/>
</dbReference>
<dbReference type="PANTHER" id="PTHR46321">
    <property type="entry name" value="KIF1-BINDING PROTEIN"/>
    <property type="match status" value="1"/>
</dbReference>
<dbReference type="Pfam" id="PF12309">
    <property type="entry name" value="KBP_C"/>
    <property type="match status" value="1"/>
</dbReference>
<dbReference type="SUPFAM" id="SSF48452">
    <property type="entry name" value="TPR-like"/>
    <property type="match status" value="1"/>
</dbReference>
<organism>
    <name type="scientific">Danio rerio</name>
    <name type="common">Zebrafish</name>
    <name type="synonym">Brachydanio rerio</name>
    <dbReference type="NCBI Taxonomy" id="7955"/>
    <lineage>
        <taxon>Eukaryota</taxon>
        <taxon>Metazoa</taxon>
        <taxon>Chordata</taxon>
        <taxon>Craniata</taxon>
        <taxon>Vertebrata</taxon>
        <taxon>Euteleostomi</taxon>
        <taxon>Actinopterygii</taxon>
        <taxon>Neopterygii</taxon>
        <taxon>Teleostei</taxon>
        <taxon>Ostariophysi</taxon>
        <taxon>Cypriniformes</taxon>
        <taxon>Danionidae</taxon>
        <taxon>Danioninae</taxon>
        <taxon>Danio</taxon>
    </lineage>
</organism>
<gene>
    <name type="primary">kifbp</name>
    <name type="synonym">kbp</name>
    <name type="synonym">kif1bp</name>
</gene>
<keyword id="KW-0963">Cytoplasm</keyword>
<keyword id="KW-0206">Cytoskeleton</keyword>
<keyword id="KW-0217">Developmental protein</keyword>
<keyword id="KW-0221">Differentiation</keyword>
<keyword id="KW-0524">Neurogenesis</keyword>
<keyword id="KW-1185">Reference proteome</keyword>
<evidence type="ECO:0000250" key="1">
    <source>
        <dbReference type="UniProtKB" id="Q96EK5"/>
    </source>
</evidence>
<evidence type="ECO:0000256" key="2">
    <source>
        <dbReference type="SAM" id="MobiDB-lite"/>
    </source>
</evidence>
<evidence type="ECO:0000269" key="3">
    <source>
    </source>
</evidence>
<evidence type="ECO:0000305" key="4"/>
<protein>
    <recommendedName>
        <fullName>KIF-binding protein</fullName>
    </recommendedName>
    <alternativeName>
        <fullName>KIF1-binding protein</fullName>
    </alternativeName>
</protein>